<reference key="1">
    <citation type="journal article" date="2008" name="BMC Genomics">
        <title>The genome sequence of the fish pathogen Aliivibrio salmonicida strain LFI1238 shows extensive evidence of gene decay.</title>
        <authorList>
            <person name="Hjerde E."/>
            <person name="Lorentzen M.S."/>
            <person name="Holden M.T."/>
            <person name="Seeger K."/>
            <person name="Paulsen S."/>
            <person name="Bason N."/>
            <person name="Churcher C."/>
            <person name="Harris D."/>
            <person name="Norbertczak H."/>
            <person name="Quail M.A."/>
            <person name="Sanders S."/>
            <person name="Thurston S."/>
            <person name="Parkhill J."/>
            <person name="Willassen N.P."/>
            <person name="Thomson N.R."/>
        </authorList>
    </citation>
    <scope>NUCLEOTIDE SEQUENCE [LARGE SCALE GENOMIC DNA]</scope>
    <source>
        <strain>LFI1238</strain>
    </source>
</reference>
<protein>
    <recommendedName>
        <fullName evidence="1">ATP synthase subunit c</fullName>
    </recommendedName>
    <alternativeName>
        <fullName evidence="1">ATP synthase F(0) sector subunit c</fullName>
    </alternativeName>
    <alternativeName>
        <fullName evidence="1">F-type ATPase subunit c</fullName>
        <shortName evidence="1">F-ATPase subunit c</shortName>
    </alternativeName>
    <alternativeName>
        <fullName evidence="1">Lipid-binding protein</fullName>
    </alternativeName>
</protein>
<keyword id="KW-0066">ATP synthesis</keyword>
<keyword id="KW-0997">Cell inner membrane</keyword>
<keyword id="KW-1003">Cell membrane</keyword>
<keyword id="KW-0138">CF(0)</keyword>
<keyword id="KW-0375">Hydrogen ion transport</keyword>
<keyword id="KW-0406">Ion transport</keyword>
<keyword id="KW-0446">Lipid-binding</keyword>
<keyword id="KW-0472">Membrane</keyword>
<keyword id="KW-0812">Transmembrane</keyword>
<keyword id="KW-1133">Transmembrane helix</keyword>
<keyword id="KW-0813">Transport</keyword>
<feature type="chain" id="PRO_1000184316" description="ATP synthase subunit c">
    <location>
        <begin position="1"/>
        <end position="85"/>
    </location>
</feature>
<feature type="transmembrane region" description="Helical" evidence="1">
    <location>
        <begin position="10"/>
        <end position="30"/>
    </location>
</feature>
<feature type="transmembrane region" description="Helical" evidence="1">
    <location>
        <begin position="53"/>
        <end position="73"/>
    </location>
</feature>
<feature type="site" description="Reversibly protonated during proton transport" evidence="1">
    <location>
        <position position="60"/>
    </location>
</feature>
<accession>B6EHU2</accession>
<organism>
    <name type="scientific">Aliivibrio salmonicida (strain LFI1238)</name>
    <name type="common">Vibrio salmonicida (strain LFI1238)</name>
    <dbReference type="NCBI Taxonomy" id="316275"/>
    <lineage>
        <taxon>Bacteria</taxon>
        <taxon>Pseudomonadati</taxon>
        <taxon>Pseudomonadota</taxon>
        <taxon>Gammaproteobacteria</taxon>
        <taxon>Vibrionales</taxon>
        <taxon>Vibrionaceae</taxon>
        <taxon>Aliivibrio</taxon>
    </lineage>
</organism>
<proteinExistence type="inferred from homology"/>
<comment type="function">
    <text evidence="1">F(1)F(0) ATP synthase produces ATP from ADP in the presence of a proton or sodium gradient. F-type ATPases consist of two structural domains, F(1) containing the extramembraneous catalytic core and F(0) containing the membrane proton channel, linked together by a central stalk and a peripheral stalk. During catalysis, ATP synthesis in the catalytic domain of F(1) is coupled via a rotary mechanism of the central stalk subunits to proton translocation.</text>
</comment>
<comment type="function">
    <text evidence="1">Key component of the F(0) channel; it plays a direct role in translocation across the membrane. A homomeric c-ring of between 10-14 subunits forms the central stalk rotor element with the F(1) delta and epsilon subunits.</text>
</comment>
<comment type="subunit">
    <text evidence="1">F-type ATPases have 2 components, F(1) - the catalytic core - and F(0) - the membrane proton channel. F(1) has five subunits: alpha(3), beta(3), gamma(1), delta(1), epsilon(1). F(0) has three main subunits: a(1), b(2) and c(10-14). The alpha and beta chains form an alternating ring which encloses part of the gamma chain. F(1) is attached to F(0) by a central stalk formed by the gamma and epsilon chains, while a peripheral stalk is formed by the delta and b chains.</text>
</comment>
<comment type="subcellular location">
    <subcellularLocation>
        <location evidence="1">Cell inner membrane</location>
        <topology evidence="1">Multi-pass membrane protein</topology>
    </subcellularLocation>
</comment>
<comment type="similarity">
    <text evidence="1">Belongs to the ATPase C chain family.</text>
</comment>
<gene>
    <name evidence="1" type="primary">atpE</name>
    <name type="ordered locus">VSAL_I3064</name>
</gene>
<name>ATPL_ALISL</name>
<sequence>METLLSFSAIAVGIIVGLASLGTAIGFAILGGKFLEGAARQPEMAPMLQVKMFIIAGLLDAVPMIGIVIALLFTFANPFVGQLAG</sequence>
<dbReference type="EMBL" id="FM178379">
    <property type="protein sequence ID" value="CAQ80748.1"/>
    <property type="molecule type" value="Genomic_DNA"/>
</dbReference>
<dbReference type="RefSeq" id="WP_012551447.1">
    <property type="nucleotide sequence ID" value="NC_011312.1"/>
</dbReference>
<dbReference type="SMR" id="B6EHU2"/>
<dbReference type="GeneID" id="93550073"/>
<dbReference type="KEGG" id="vsa:VSAL_I3064"/>
<dbReference type="eggNOG" id="ENOG5032S3K">
    <property type="taxonomic scope" value="Bacteria"/>
</dbReference>
<dbReference type="HOGENOM" id="CLU_148047_1_0_6"/>
<dbReference type="Proteomes" id="UP000001730">
    <property type="component" value="Chromosome 1"/>
</dbReference>
<dbReference type="GO" id="GO:0005886">
    <property type="term" value="C:plasma membrane"/>
    <property type="evidence" value="ECO:0007669"/>
    <property type="project" value="UniProtKB-SubCell"/>
</dbReference>
<dbReference type="GO" id="GO:0045259">
    <property type="term" value="C:proton-transporting ATP synthase complex"/>
    <property type="evidence" value="ECO:0007669"/>
    <property type="project" value="UniProtKB-KW"/>
</dbReference>
<dbReference type="GO" id="GO:0033177">
    <property type="term" value="C:proton-transporting two-sector ATPase complex, proton-transporting domain"/>
    <property type="evidence" value="ECO:0007669"/>
    <property type="project" value="InterPro"/>
</dbReference>
<dbReference type="GO" id="GO:0008289">
    <property type="term" value="F:lipid binding"/>
    <property type="evidence" value="ECO:0007669"/>
    <property type="project" value="UniProtKB-KW"/>
</dbReference>
<dbReference type="GO" id="GO:0046933">
    <property type="term" value="F:proton-transporting ATP synthase activity, rotational mechanism"/>
    <property type="evidence" value="ECO:0007669"/>
    <property type="project" value="UniProtKB-UniRule"/>
</dbReference>
<dbReference type="CDD" id="cd18185">
    <property type="entry name" value="ATP-synt_Fo_c_ATPE"/>
    <property type="match status" value="1"/>
</dbReference>
<dbReference type="FunFam" id="1.20.20.10:FF:000002">
    <property type="entry name" value="ATP synthase subunit c"/>
    <property type="match status" value="1"/>
</dbReference>
<dbReference type="Gene3D" id="1.20.20.10">
    <property type="entry name" value="F1F0 ATP synthase subunit C"/>
    <property type="match status" value="1"/>
</dbReference>
<dbReference type="HAMAP" id="MF_01396">
    <property type="entry name" value="ATP_synth_c_bact"/>
    <property type="match status" value="1"/>
</dbReference>
<dbReference type="InterPro" id="IPR005953">
    <property type="entry name" value="ATP_synth_csu_bac/chlpt"/>
</dbReference>
<dbReference type="InterPro" id="IPR000454">
    <property type="entry name" value="ATP_synth_F0_csu"/>
</dbReference>
<dbReference type="InterPro" id="IPR020537">
    <property type="entry name" value="ATP_synth_F0_csu_DDCD_BS"/>
</dbReference>
<dbReference type="InterPro" id="IPR038662">
    <property type="entry name" value="ATP_synth_F0_csu_sf"/>
</dbReference>
<dbReference type="InterPro" id="IPR002379">
    <property type="entry name" value="ATPase_proteolipid_c-like_dom"/>
</dbReference>
<dbReference type="InterPro" id="IPR035921">
    <property type="entry name" value="F/V-ATP_Csub_sf"/>
</dbReference>
<dbReference type="NCBIfam" id="TIGR01260">
    <property type="entry name" value="ATP_synt_c"/>
    <property type="match status" value="1"/>
</dbReference>
<dbReference type="NCBIfam" id="NF005363">
    <property type="entry name" value="PRK06876.1"/>
    <property type="match status" value="1"/>
</dbReference>
<dbReference type="Pfam" id="PF00137">
    <property type="entry name" value="ATP-synt_C"/>
    <property type="match status" value="1"/>
</dbReference>
<dbReference type="PRINTS" id="PR00124">
    <property type="entry name" value="ATPASEC"/>
</dbReference>
<dbReference type="SUPFAM" id="SSF81333">
    <property type="entry name" value="F1F0 ATP synthase subunit C"/>
    <property type="match status" value="1"/>
</dbReference>
<dbReference type="PROSITE" id="PS00605">
    <property type="entry name" value="ATPASE_C"/>
    <property type="match status" value="1"/>
</dbReference>
<evidence type="ECO:0000255" key="1">
    <source>
        <dbReference type="HAMAP-Rule" id="MF_01396"/>
    </source>
</evidence>